<dbReference type="EC" id="7.6.2.14" evidence="1"/>
<dbReference type="EMBL" id="AL590842">
    <property type="protein sequence ID" value="CAL22215.1"/>
    <property type="molecule type" value="Genomic_DNA"/>
</dbReference>
<dbReference type="EMBL" id="AE009952">
    <property type="protein sequence ID" value="AAM83836.1"/>
    <property type="status" value="ALT_INIT"/>
    <property type="molecule type" value="Genomic_DNA"/>
</dbReference>
<dbReference type="EMBL" id="AE017042">
    <property type="protein sequence ID" value="AAS64065.1"/>
    <property type="molecule type" value="Genomic_DNA"/>
</dbReference>
<dbReference type="PIR" id="AD0441">
    <property type="entry name" value="AD0441"/>
</dbReference>
<dbReference type="RefSeq" id="WP_002210036.1">
    <property type="nucleotide sequence ID" value="NZ_WUCM01000052.1"/>
</dbReference>
<dbReference type="RefSeq" id="YP_002348512.1">
    <property type="nucleotide sequence ID" value="NC_003143.1"/>
</dbReference>
<dbReference type="SMR" id="Q74PI5"/>
<dbReference type="STRING" id="214092.YPO3627"/>
<dbReference type="PaxDb" id="214092-YPO3627"/>
<dbReference type="EnsemblBacteria" id="AAS64065">
    <property type="protein sequence ID" value="AAS64065"/>
    <property type="gene ID" value="YP_3920"/>
</dbReference>
<dbReference type="GeneID" id="57975053"/>
<dbReference type="KEGG" id="ype:YPO3627"/>
<dbReference type="KEGG" id="ypk:y0242"/>
<dbReference type="KEGG" id="ypm:YP_3920"/>
<dbReference type="PATRIC" id="fig|214092.21.peg.4128"/>
<dbReference type="eggNOG" id="COG1116">
    <property type="taxonomic scope" value="Bacteria"/>
</dbReference>
<dbReference type="HOGENOM" id="CLU_000604_1_22_6"/>
<dbReference type="OMA" id="RMKDFDA"/>
<dbReference type="OrthoDB" id="9802264at2"/>
<dbReference type="Proteomes" id="UP000000815">
    <property type="component" value="Chromosome"/>
</dbReference>
<dbReference type="Proteomes" id="UP000001019">
    <property type="component" value="Chromosome"/>
</dbReference>
<dbReference type="Proteomes" id="UP000002490">
    <property type="component" value="Chromosome"/>
</dbReference>
<dbReference type="GO" id="GO:0005886">
    <property type="term" value="C:plasma membrane"/>
    <property type="evidence" value="ECO:0007669"/>
    <property type="project" value="UniProtKB-SubCell"/>
</dbReference>
<dbReference type="GO" id="GO:0005524">
    <property type="term" value="F:ATP binding"/>
    <property type="evidence" value="ECO:0007669"/>
    <property type="project" value="UniProtKB-KW"/>
</dbReference>
<dbReference type="GO" id="GO:0016887">
    <property type="term" value="F:ATP hydrolysis activity"/>
    <property type="evidence" value="ECO:0007669"/>
    <property type="project" value="InterPro"/>
</dbReference>
<dbReference type="CDD" id="cd03293">
    <property type="entry name" value="ABC_NrtD_SsuB_transporters"/>
    <property type="match status" value="1"/>
</dbReference>
<dbReference type="FunFam" id="3.40.50.300:FF:000653">
    <property type="entry name" value="Aliphatic sulfonates import ATP-binding protein SsuB"/>
    <property type="match status" value="1"/>
</dbReference>
<dbReference type="Gene3D" id="3.40.50.300">
    <property type="entry name" value="P-loop containing nucleotide triphosphate hydrolases"/>
    <property type="match status" value="1"/>
</dbReference>
<dbReference type="InterPro" id="IPR003593">
    <property type="entry name" value="AAA+_ATPase"/>
</dbReference>
<dbReference type="InterPro" id="IPR003439">
    <property type="entry name" value="ABC_transporter-like_ATP-bd"/>
</dbReference>
<dbReference type="InterPro" id="IPR017871">
    <property type="entry name" value="ABC_transporter-like_CS"/>
</dbReference>
<dbReference type="InterPro" id="IPR050166">
    <property type="entry name" value="ABC_transporter_ATP-bind"/>
</dbReference>
<dbReference type="InterPro" id="IPR027417">
    <property type="entry name" value="P-loop_NTPase"/>
</dbReference>
<dbReference type="NCBIfam" id="NF008420">
    <property type="entry name" value="PRK11247.1"/>
    <property type="match status" value="1"/>
</dbReference>
<dbReference type="PANTHER" id="PTHR42788:SF17">
    <property type="entry name" value="ALIPHATIC SULFONATES IMPORT ATP-BINDING PROTEIN SSUB"/>
    <property type="match status" value="1"/>
</dbReference>
<dbReference type="PANTHER" id="PTHR42788">
    <property type="entry name" value="TAURINE IMPORT ATP-BINDING PROTEIN-RELATED"/>
    <property type="match status" value="1"/>
</dbReference>
<dbReference type="Pfam" id="PF00005">
    <property type="entry name" value="ABC_tran"/>
    <property type="match status" value="1"/>
</dbReference>
<dbReference type="SMART" id="SM00382">
    <property type="entry name" value="AAA"/>
    <property type="match status" value="1"/>
</dbReference>
<dbReference type="SUPFAM" id="SSF52540">
    <property type="entry name" value="P-loop containing nucleoside triphosphate hydrolases"/>
    <property type="match status" value="1"/>
</dbReference>
<dbReference type="PROSITE" id="PS00211">
    <property type="entry name" value="ABC_TRANSPORTER_1"/>
    <property type="match status" value="1"/>
</dbReference>
<dbReference type="PROSITE" id="PS50893">
    <property type="entry name" value="ABC_TRANSPORTER_2"/>
    <property type="match status" value="1"/>
</dbReference>
<dbReference type="PROSITE" id="PS51291">
    <property type="entry name" value="SSUB"/>
    <property type="match status" value="1"/>
</dbReference>
<protein>
    <recommendedName>
        <fullName evidence="1">Aliphatic sulfonates import ATP-binding protein SsuB</fullName>
        <ecNumber evidence="1">7.6.2.14</ecNumber>
    </recommendedName>
</protein>
<proteinExistence type="inferred from homology"/>
<sequence>MTTLTHIPQGTPITLESIGKRYGNRTVLDNLQLRITAGQFVAVVGRSGCGKSTLLRLLAGLEAASDGTLLSGNALLSHAKDETRLMFQEARLLPWKKVIDNVGLGLRGHWRDEALQVLDTVGLADRANEWPAALSGGQKQRVALARALIHRPRLLLLDEPLGALDALTRIEMQGLIERLWQQHGFTVLLVTHDVSEAIALADRVLLIEEGRIGLDLAIDLPRPRRKGSAKLAALEAEVLERVLSPPQGIEASRQGIKASRQGTATSRRVAN</sequence>
<evidence type="ECO:0000255" key="1">
    <source>
        <dbReference type="HAMAP-Rule" id="MF_01724"/>
    </source>
</evidence>
<evidence type="ECO:0000256" key="2">
    <source>
        <dbReference type="SAM" id="MobiDB-lite"/>
    </source>
</evidence>
<evidence type="ECO:0000305" key="3"/>
<organism>
    <name type="scientific">Yersinia pestis</name>
    <dbReference type="NCBI Taxonomy" id="632"/>
    <lineage>
        <taxon>Bacteria</taxon>
        <taxon>Pseudomonadati</taxon>
        <taxon>Pseudomonadota</taxon>
        <taxon>Gammaproteobacteria</taxon>
        <taxon>Enterobacterales</taxon>
        <taxon>Yersiniaceae</taxon>
        <taxon>Yersinia</taxon>
    </lineage>
</organism>
<gene>
    <name evidence="1" type="primary">ssuB</name>
    <name type="ordered locus">YPO3627</name>
    <name type="ordered locus">y0242</name>
    <name type="ordered locus">YP_3920</name>
</gene>
<feature type="chain" id="PRO_0000279967" description="Aliphatic sulfonates import ATP-binding protein SsuB">
    <location>
        <begin position="1"/>
        <end position="271"/>
    </location>
</feature>
<feature type="domain" description="ABC transporter" evidence="1">
    <location>
        <begin position="13"/>
        <end position="234"/>
    </location>
</feature>
<feature type="region of interest" description="Disordered" evidence="2">
    <location>
        <begin position="250"/>
        <end position="271"/>
    </location>
</feature>
<feature type="compositionally biased region" description="Polar residues" evidence="2">
    <location>
        <begin position="260"/>
        <end position="271"/>
    </location>
</feature>
<feature type="binding site" evidence="1">
    <location>
        <begin position="45"/>
        <end position="52"/>
    </location>
    <ligand>
        <name>ATP</name>
        <dbReference type="ChEBI" id="CHEBI:30616"/>
    </ligand>
</feature>
<reference key="1">
    <citation type="journal article" date="2001" name="Nature">
        <title>Genome sequence of Yersinia pestis, the causative agent of plague.</title>
        <authorList>
            <person name="Parkhill J."/>
            <person name="Wren B.W."/>
            <person name="Thomson N.R."/>
            <person name="Titball R.W."/>
            <person name="Holden M.T.G."/>
            <person name="Prentice M.B."/>
            <person name="Sebaihia M."/>
            <person name="James K.D."/>
            <person name="Churcher C.M."/>
            <person name="Mungall K.L."/>
            <person name="Baker S."/>
            <person name="Basham D."/>
            <person name="Bentley S.D."/>
            <person name="Brooks K."/>
            <person name="Cerdeno-Tarraga A.-M."/>
            <person name="Chillingworth T."/>
            <person name="Cronin A."/>
            <person name="Davies R.M."/>
            <person name="Davis P."/>
            <person name="Dougan G."/>
            <person name="Feltwell T."/>
            <person name="Hamlin N."/>
            <person name="Holroyd S."/>
            <person name="Jagels K."/>
            <person name="Karlyshev A.V."/>
            <person name="Leather S."/>
            <person name="Moule S."/>
            <person name="Oyston P.C.F."/>
            <person name="Quail M.A."/>
            <person name="Rutherford K.M."/>
            <person name="Simmonds M."/>
            <person name="Skelton J."/>
            <person name="Stevens K."/>
            <person name="Whitehead S."/>
            <person name="Barrell B.G."/>
        </authorList>
    </citation>
    <scope>NUCLEOTIDE SEQUENCE [LARGE SCALE GENOMIC DNA]</scope>
    <source>
        <strain>CO-92 / Biovar Orientalis</strain>
    </source>
</reference>
<reference key="2">
    <citation type="journal article" date="2002" name="J. Bacteriol.">
        <title>Genome sequence of Yersinia pestis KIM.</title>
        <authorList>
            <person name="Deng W."/>
            <person name="Burland V."/>
            <person name="Plunkett G. III"/>
            <person name="Boutin A."/>
            <person name="Mayhew G.F."/>
            <person name="Liss P."/>
            <person name="Perna N.T."/>
            <person name="Rose D.J."/>
            <person name="Mau B."/>
            <person name="Zhou S."/>
            <person name="Schwartz D.C."/>
            <person name="Fetherston J.D."/>
            <person name="Lindler L.E."/>
            <person name="Brubaker R.R."/>
            <person name="Plano G.V."/>
            <person name="Straley S.C."/>
            <person name="McDonough K.A."/>
            <person name="Nilles M.L."/>
            <person name="Matson J.S."/>
            <person name="Blattner F.R."/>
            <person name="Perry R.D."/>
        </authorList>
    </citation>
    <scope>NUCLEOTIDE SEQUENCE [LARGE SCALE GENOMIC DNA]</scope>
    <source>
        <strain>KIM10+ / Biovar Mediaevalis</strain>
    </source>
</reference>
<reference key="3">
    <citation type="journal article" date="2004" name="DNA Res.">
        <title>Complete genome sequence of Yersinia pestis strain 91001, an isolate avirulent to humans.</title>
        <authorList>
            <person name="Song Y."/>
            <person name="Tong Z."/>
            <person name="Wang J."/>
            <person name="Wang L."/>
            <person name="Guo Z."/>
            <person name="Han Y."/>
            <person name="Zhang J."/>
            <person name="Pei D."/>
            <person name="Zhou D."/>
            <person name="Qin H."/>
            <person name="Pang X."/>
            <person name="Han Y."/>
            <person name="Zhai J."/>
            <person name="Li M."/>
            <person name="Cui B."/>
            <person name="Qi Z."/>
            <person name="Jin L."/>
            <person name="Dai R."/>
            <person name="Chen F."/>
            <person name="Li S."/>
            <person name="Ye C."/>
            <person name="Du Z."/>
            <person name="Lin W."/>
            <person name="Wang J."/>
            <person name="Yu J."/>
            <person name="Yang H."/>
            <person name="Wang J."/>
            <person name="Huang P."/>
            <person name="Yang R."/>
        </authorList>
    </citation>
    <scope>NUCLEOTIDE SEQUENCE [LARGE SCALE GENOMIC DNA]</scope>
    <source>
        <strain>91001 / Biovar Mediaevalis</strain>
    </source>
</reference>
<name>SSUB_YERPE</name>
<accession>Q74PI5</accession>
<accession>Q8D1N1</accession>
<comment type="function">
    <text evidence="1">Part of the ABC transporter complex SsuABC involved in aliphatic sulfonates import. Responsible for energy coupling to the transport system.</text>
</comment>
<comment type="catalytic activity">
    <reaction evidence="1">
        <text>ATP + H2O + aliphatic sulfonate-[sulfonate-binding protein]Side 1 = ADP + phosphate + aliphatic sulfonateSide 2 + [sulfonate-binding protein]Side 1.</text>
        <dbReference type="EC" id="7.6.2.14"/>
    </reaction>
</comment>
<comment type="subunit">
    <text evidence="1">The complex is composed of two ATP-binding proteins (SsuB), two transmembrane proteins (SsuC) and a solute-binding protein (SsuA).</text>
</comment>
<comment type="subcellular location">
    <subcellularLocation>
        <location evidence="1">Cell inner membrane</location>
        <topology evidence="1">Peripheral membrane protein</topology>
    </subcellularLocation>
</comment>
<comment type="similarity">
    <text evidence="1">Belongs to the ABC transporter superfamily. Aliphatic sulfonates importer (TC 3.A.1.17.2) family.</text>
</comment>
<comment type="sequence caution" evidence="3">
    <conflict type="erroneous initiation">
        <sequence resource="EMBL-CDS" id="AAM83836"/>
    </conflict>
</comment>
<keyword id="KW-0067">ATP-binding</keyword>
<keyword id="KW-0997">Cell inner membrane</keyword>
<keyword id="KW-1003">Cell membrane</keyword>
<keyword id="KW-0472">Membrane</keyword>
<keyword id="KW-0547">Nucleotide-binding</keyword>
<keyword id="KW-1185">Reference proteome</keyword>
<keyword id="KW-1278">Translocase</keyword>
<keyword id="KW-0813">Transport</keyword>